<name>KIN29_CAEEL</name>
<dbReference type="EC" id="2.7.11.1"/>
<dbReference type="EMBL" id="AF403714">
    <property type="protein sequence ID" value="AAK97497.1"/>
    <property type="molecule type" value="mRNA"/>
</dbReference>
<dbReference type="EMBL" id="FO081451">
    <property type="protein sequence ID" value="CCD71675.1"/>
    <property type="molecule type" value="Genomic_DNA"/>
</dbReference>
<dbReference type="PIR" id="T16504">
    <property type="entry name" value="T16504"/>
</dbReference>
<dbReference type="RefSeq" id="NP_508493.1">
    <property type="nucleotide sequence ID" value="NM_076092.7"/>
</dbReference>
<dbReference type="SMR" id="Q21017"/>
<dbReference type="BioGRID" id="45518">
    <property type="interactions" value="3"/>
</dbReference>
<dbReference type="FunCoup" id="Q21017">
    <property type="interactions" value="113"/>
</dbReference>
<dbReference type="IntAct" id="Q21017">
    <property type="interactions" value="2"/>
</dbReference>
<dbReference type="MINT" id="Q21017"/>
<dbReference type="STRING" id="6239.F58H12.1.1"/>
<dbReference type="iPTMnet" id="Q21017"/>
<dbReference type="PaxDb" id="6239-F58H12.1"/>
<dbReference type="PeptideAtlas" id="Q21017"/>
<dbReference type="EnsemblMetazoa" id="F58H12.1.1">
    <property type="protein sequence ID" value="F58H12.1.1"/>
    <property type="gene ID" value="WBGene00002210"/>
</dbReference>
<dbReference type="GeneID" id="180574"/>
<dbReference type="KEGG" id="cel:CELE_F58H12.1"/>
<dbReference type="UCSC" id="F58H12.1">
    <property type="organism name" value="c. elegans"/>
</dbReference>
<dbReference type="AGR" id="WB:WBGene00002210"/>
<dbReference type="CTD" id="180574"/>
<dbReference type="WormBase" id="F58H12.1">
    <property type="protein sequence ID" value="CE28479"/>
    <property type="gene ID" value="WBGene00002210"/>
    <property type="gene designation" value="kin-29"/>
</dbReference>
<dbReference type="eggNOG" id="KOG0583">
    <property type="taxonomic scope" value="Eukaryota"/>
</dbReference>
<dbReference type="GeneTree" id="ENSGT00940000156445"/>
<dbReference type="HOGENOM" id="CLU_016746_0_0_1"/>
<dbReference type="InParanoid" id="Q21017"/>
<dbReference type="OMA" id="KIPYWVS"/>
<dbReference type="OrthoDB" id="193931at2759"/>
<dbReference type="PRO" id="PR:Q21017"/>
<dbReference type="Proteomes" id="UP000001940">
    <property type="component" value="Chromosome X"/>
</dbReference>
<dbReference type="Bgee" id="WBGene00002210">
    <property type="expression patterns" value="Expressed in pharyngeal muscle cell (C elegans) and 3 other cell types or tissues"/>
</dbReference>
<dbReference type="GO" id="GO:0005737">
    <property type="term" value="C:cytoplasm"/>
    <property type="evidence" value="ECO:0000314"/>
    <property type="project" value="WormBase"/>
</dbReference>
<dbReference type="GO" id="GO:0005634">
    <property type="term" value="C:nucleus"/>
    <property type="evidence" value="ECO:0000314"/>
    <property type="project" value="WormBase"/>
</dbReference>
<dbReference type="GO" id="GO:0005524">
    <property type="term" value="F:ATP binding"/>
    <property type="evidence" value="ECO:0007669"/>
    <property type="project" value="UniProtKB-KW"/>
</dbReference>
<dbReference type="GO" id="GO:0046811">
    <property type="term" value="F:histone deacetylase inhibitor activity"/>
    <property type="evidence" value="ECO:0000314"/>
    <property type="project" value="WormBase"/>
</dbReference>
<dbReference type="GO" id="GO:0046872">
    <property type="term" value="F:metal ion binding"/>
    <property type="evidence" value="ECO:0007669"/>
    <property type="project" value="UniProtKB-KW"/>
</dbReference>
<dbReference type="GO" id="GO:0004672">
    <property type="term" value="F:protein kinase activity"/>
    <property type="evidence" value="ECO:0000314"/>
    <property type="project" value="WormBase"/>
</dbReference>
<dbReference type="GO" id="GO:0106310">
    <property type="term" value="F:protein serine kinase activity"/>
    <property type="evidence" value="ECO:0007669"/>
    <property type="project" value="RHEA"/>
</dbReference>
<dbReference type="GO" id="GO:0004674">
    <property type="term" value="F:protein serine/threonine kinase activity"/>
    <property type="evidence" value="ECO:0000314"/>
    <property type="project" value="WormBase"/>
</dbReference>
<dbReference type="GO" id="GO:0043053">
    <property type="term" value="P:dauer entry"/>
    <property type="evidence" value="ECO:0000315"/>
    <property type="project" value="WormBase"/>
</dbReference>
<dbReference type="GO" id="GO:0040024">
    <property type="term" value="P:dauer larval development"/>
    <property type="evidence" value="ECO:0000315"/>
    <property type="project" value="WormBase"/>
</dbReference>
<dbReference type="GO" id="GO:0035556">
    <property type="term" value="P:intracellular signal transduction"/>
    <property type="evidence" value="ECO:0000318"/>
    <property type="project" value="GO_Central"/>
</dbReference>
<dbReference type="GO" id="GO:0045717">
    <property type="term" value="P:negative regulation of fatty acid biosynthetic process"/>
    <property type="evidence" value="ECO:0000304"/>
    <property type="project" value="WormBase"/>
</dbReference>
<dbReference type="GO" id="GO:0010628">
    <property type="term" value="P:positive regulation of gene expression"/>
    <property type="evidence" value="ECO:0000315"/>
    <property type="project" value="UniProtKB"/>
</dbReference>
<dbReference type="GO" id="GO:0040010">
    <property type="term" value="P:positive regulation of growth rate"/>
    <property type="evidence" value="ECO:0000315"/>
    <property type="project" value="WormBase"/>
</dbReference>
<dbReference type="GO" id="GO:0040018">
    <property type="term" value="P:positive regulation of multicellular organism growth"/>
    <property type="evidence" value="ECO:0000315"/>
    <property type="project" value="WormBase"/>
</dbReference>
<dbReference type="GO" id="GO:0040014">
    <property type="term" value="P:regulation of multicellular organism growth"/>
    <property type="evidence" value="ECO:0000315"/>
    <property type="project" value="WormBase"/>
</dbReference>
<dbReference type="GO" id="GO:0022414">
    <property type="term" value="P:reproductive process"/>
    <property type="evidence" value="ECO:0000315"/>
    <property type="project" value="WormBase"/>
</dbReference>
<dbReference type="GO" id="GO:0009408">
    <property type="term" value="P:response to heat"/>
    <property type="evidence" value="ECO:0000270"/>
    <property type="project" value="WormBase"/>
</dbReference>
<dbReference type="GO" id="GO:0007179">
    <property type="term" value="P:transforming growth factor beta receptor signaling pathway"/>
    <property type="evidence" value="ECO:0000316"/>
    <property type="project" value="WormBase"/>
</dbReference>
<dbReference type="FunFam" id="3.30.200.20:FF:000003">
    <property type="entry name" value="Non-specific serine/threonine protein kinase"/>
    <property type="match status" value="1"/>
</dbReference>
<dbReference type="FunFam" id="1.10.510.10:FF:001295">
    <property type="entry name" value="Serine/threonine-protein kinase kin-29"/>
    <property type="match status" value="1"/>
</dbReference>
<dbReference type="Gene3D" id="1.10.510.10">
    <property type="entry name" value="Transferase(Phosphotransferase) domain 1"/>
    <property type="match status" value="1"/>
</dbReference>
<dbReference type="InterPro" id="IPR011009">
    <property type="entry name" value="Kinase-like_dom_sf"/>
</dbReference>
<dbReference type="InterPro" id="IPR000719">
    <property type="entry name" value="Prot_kinase_dom"/>
</dbReference>
<dbReference type="InterPro" id="IPR017441">
    <property type="entry name" value="Protein_kinase_ATP_BS"/>
</dbReference>
<dbReference type="InterPro" id="IPR008271">
    <property type="entry name" value="Ser/Thr_kinase_AS"/>
</dbReference>
<dbReference type="PANTHER" id="PTHR24346:SF82">
    <property type="entry name" value="KP78A-RELATED"/>
    <property type="match status" value="1"/>
</dbReference>
<dbReference type="PANTHER" id="PTHR24346">
    <property type="entry name" value="MAP/MICROTUBULE AFFINITY-REGULATING KINASE"/>
    <property type="match status" value="1"/>
</dbReference>
<dbReference type="Pfam" id="PF00069">
    <property type="entry name" value="Pkinase"/>
    <property type="match status" value="1"/>
</dbReference>
<dbReference type="SMART" id="SM00220">
    <property type="entry name" value="S_TKc"/>
    <property type="match status" value="1"/>
</dbReference>
<dbReference type="SUPFAM" id="SSF56112">
    <property type="entry name" value="Protein kinase-like (PK-like)"/>
    <property type="match status" value="1"/>
</dbReference>
<dbReference type="PROSITE" id="PS00107">
    <property type="entry name" value="PROTEIN_KINASE_ATP"/>
    <property type="match status" value="1"/>
</dbReference>
<dbReference type="PROSITE" id="PS50011">
    <property type="entry name" value="PROTEIN_KINASE_DOM"/>
    <property type="match status" value="1"/>
</dbReference>
<dbReference type="PROSITE" id="PS00108">
    <property type="entry name" value="PROTEIN_KINASE_ST"/>
    <property type="match status" value="1"/>
</dbReference>
<keyword id="KW-0067">ATP-binding</keyword>
<keyword id="KW-0963">Cytoplasm</keyword>
<keyword id="KW-0217">Developmental protein</keyword>
<keyword id="KW-0418">Kinase</keyword>
<keyword id="KW-0460">Magnesium</keyword>
<keyword id="KW-0479">Metal-binding</keyword>
<keyword id="KW-0547">Nucleotide-binding</keyword>
<keyword id="KW-0539">Nucleus</keyword>
<keyword id="KW-1185">Reference proteome</keyword>
<keyword id="KW-0723">Serine/threonine-protein kinase</keyword>
<keyword id="KW-0808">Transferase</keyword>
<gene>
    <name evidence="13" type="primary">kin-29</name>
    <name evidence="10" type="synonym">sma-11</name>
    <name type="ORF">F58H12.1</name>
</gene>
<evidence type="ECO:0000250" key="1">
    <source>
        <dbReference type="UniProtKB" id="P28523"/>
    </source>
</evidence>
<evidence type="ECO:0000255" key="2">
    <source>
        <dbReference type="PROSITE-ProRule" id="PRU00159"/>
    </source>
</evidence>
<evidence type="ECO:0000255" key="3">
    <source>
        <dbReference type="PROSITE-ProRule" id="PRU10027"/>
    </source>
</evidence>
<evidence type="ECO:0000256" key="4">
    <source>
        <dbReference type="SAM" id="MobiDB-lite"/>
    </source>
</evidence>
<evidence type="ECO:0000269" key="5">
    <source>
    </source>
</evidence>
<evidence type="ECO:0000269" key="6">
    <source>
    </source>
</evidence>
<evidence type="ECO:0000269" key="7">
    <source>
    </source>
</evidence>
<evidence type="ECO:0000269" key="8">
    <source>
    </source>
</evidence>
<evidence type="ECO:0000269" key="9">
    <source>
    </source>
</evidence>
<evidence type="ECO:0000303" key="10">
    <source>
    </source>
</evidence>
<evidence type="ECO:0000305" key="11"/>
<evidence type="ECO:0000312" key="12">
    <source>
        <dbReference type="EMBL" id="AAK97497.1"/>
    </source>
</evidence>
<evidence type="ECO:0000312" key="13">
    <source>
        <dbReference type="WormBase" id="F58H12.1"/>
    </source>
</evidence>
<reference evidence="11 12" key="1">
    <citation type="journal article" date="2002" name="Neuron">
        <title>Regulation of chemosensory receptor expression and sensory signaling by the KIN-29 Ser/Thr kinase.</title>
        <authorList>
            <person name="Lanjuin A."/>
            <person name="Sengupta P."/>
        </authorList>
    </citation>
    <scope>NUCLEOTIDE SEQUENCE [MRNA]</scope>
    <scope>FUNCTION</scope>
    <scope>SUBCELLULAR LOCATION</scope>
    <scope>TISSUE SPECIFICITY</scope>
    <scope>DEVELOPMENTAL STAGE</scope>
    <scope>DISRUPTION PHENOTYPE</scope>
</reference>
<reference key="2">
    <citation type="journal article" date="1998" name="Science">
        <title>Genome sequence of the nematode C. elegans: a platform for investigating biology.</title>
        <authorList>
            <consortium name="The C. elegans sequencing consortium"/>
        </authorList>
    </citation>
    <scope>NUCLEOTIDE SEQUENCE [LARGE SCALE GENOMIC DNA]</scope>
    <source>
        <strain>Bristol N2</strain>
    </source>
</reference>
<reference evidence="11" key="3">
    <citation type="journal article" date="2005" name="BMC Dev. Biol.">
        <title>C. elegans serine-threonine kinase KIN-29 modulates TGFbeta signaling and regulates body size formation.</title>
        <authorList>
            <person name="Maduzia L.L."/>
            <person name="Roberts A.F."/>
            <person name="Wang H."/>
            <person name="Lin X."/>
            <person name="Chin L.J."/>
            <person name="Zimmerman C.M."/>
            <person name="Cohen S."/>
            <person name="Feng X.H."/>
            <person name="Padgett R.W."/>
        </authorList>
    </citation>
    <scope>FUNCTION</scope>
    <scope>SUBCELLULAR LOCATION</scope>
    <scope>DEVELOPMENTAL STAGE</scope>
    <scope>AUTOPHOSPHORYLATION</scope>
    <scope>DISRUPTION PHENOTYPE</scope>
</reference>
<reference evidence="11" key="4">
    <citation type="journal article" date="2007" name="Biochem. Biophys. Res. Commun.">
        <title>Calcineurin interacts with KIN-29, a Ser/Thr kinase, in Caenorhabditis elegans.</title>
        <authorList>
            <person name="Singaravelu G."/>
            <person name="Song H.O."/>
            <person name="Ji Y.J."/>
            <person name="Jee C."/>
            <person name="Park B.J."/>
            <person name="Ahnn J."/>
        </authorList>
    </citation>
    <scope>FUNCTION</scope>
    <scope>INTERACTION WITH TAX-6</scope>
</reference>
<reference evidence="11" key="5">
    <citation type="journal article" date="2007" name="EMBO J.">
        <title>KIN-29 SIK regulates chemoreceptor gene expression via an MEF2 transcription factor and a class II HDAC.</title>
        <authorList>
            <person name="van der Linden A.M."/>
            <person name="Nolan K.M."/>
            <person name="Sengupta P."/>
        </authorList>
    </citation>
    <scope>FUNCTION</scope>
    <scope>DISRUPTION PHENOTYPE</scope>
</reference>
<reference evidence="11" key="6">
    <citation type="journal article" date="2008" name="Genetics">
        <title>The EGL-4 PKG acts with KIN-29 salt-inducible kinase and protein kinase A to regulate chemoreceptor gene expression and sensory behaviors in Caenorhabditis elegans.</title>
        <authorList>
            <person name="van der Linden A.M."/>
            <person name="Wiener S."/>
            <person name="You Y.J."/>
            <person name="Kim K."/>
            <person name="Avery L."/>
            <person name="Sengupta P."/>
        </authorList>
    </citation>
    <scope>FUNCTION</scope>
    <scope>PHOSPHORYLATION</scope>
    <scope>DISRUPTION PHENOTYPE</scope>
</reference>
<sequence>MAAPRRRMGLEKIGLYDVGRAIGKGNFATVRIARHKIAKTKVAIKSIDVSALDRENLIKLEREVKIVKVIDHPHIVKSYEIMRVDNMLYIVSEYCSSGELYETLIEKGRVAENVARKWFSETASAVAYLHSQGIVHRDLKAENILLGKNSNIKIIDFGFSNFQTGDQLLNTWCGSPPYAAPELLLGNSYDGMKADIWSMGVLLYILVAGGFPFPSDSVNKLKRSVLSGLVKIPYWVSVECADFIRKMLVLNPGKRYTIQNVLQHRWMHIRDDVQKNQAAQLLEAIPSSSIEIRQQSTKLNPTIMMFMQQHGKWSEEQIIDAVLGRDFESPIFATYELLADKVKKGTLEGTGEEFPRRGSRGSILSGKANVDEQPLTPTISAHQLAQLNLSSPDCDSDDSSNSDLCDDSPMSSMGPMNHERQFGTPHGLDIIGNRFENRRHTLCASEQLLSPNMMGQFPPPNLLLNNFSMNPPLGFPPMPEGQAAEFPLPSLHPAFATIPIADLSKMLPVPKSERRASAGETLLPTNFDLTQHLANLPAPPISFPTVEEEGKSYLSKYGGKRNTVHCLGNQLGGGIQNPIPRYQRTPYTKAPPAERRSSWASPSLSAQQQNHLEKLFKQALQTNNDMTRLHKEFKGLSHGCAQSQITNEGSSLACPQISITDEYNRQHNIAPSASSFDPVSIFQKNAQEVVFGQRPATAIGFSSTSFSGMSTPEQTTRSIDDRVRSIVCTLPFTEVIDELKASLNILKIPFSESHEMVYEPQVTEMRRLSLPSGVEIGVAVLPPEHKAHVEFAIINNDSPTSEYLCDQLICRLRMIDPSWSSE</sequence>
<protein>
    <recommendedName>
        <fullName>Serine/threonine-protein kinase kin-29</fullName>
        <ecNumber>2.7.11.1</ecNumber>
    </recommendedName>
</protein>
<organism>
    <name type="scientific">Caenorhabditis elegans</name>
    <dbReference type="NCBI Taxonomy" id="6239"/>
    <lineage>
        <taxon>Eukaryota</taxon>
        <taxon>Metazoa</taxon>
        <taxon>Ecdysozoa</taxon>
        <taxon>Nematoda</taxon>
        <taxon>Chromadorea</taxon>
        <taxon>Rhabditida</taxon>
        <taxon>Rhabditina</taxon>
        <taxon>Rhabditomorpha</taxon>
        <taxon>Rhabditoidea</taxon>
        <taxon>Rhabditidae</taxon>
        <taxon>Peloderinae</taxon>
        <taxon>Caenorhabditis</taxon>
    </lineage>
</organism>
<proteinExistence type="evidence at protein level"/>
<accession>Q21017</accession>
<comment type="function">
    <text evidence="5 6 7 8 9">Regulates chemoreceptor expression by phosphorylating the hda-4 class II histone deacetylase (HDAC) and inhibiting the gene repression functions of hda-4 and the mef-2 transcription factor, enabling the correct sensing and transduction of food signals. Role in determining body size, the dauer decision and serotonin-mediated egg laying. May modulate the Sma/Mab pathway and regulates development in the later larval stages.</text>
</comment>
<comment type="catalytic activity">
    <reaction evidence="6">
        <text>L-seryl-[protein] + ATP = O-phospho-L-seryl-[protein] + ADP + H(+)</text>
        <dbReference type="Rhea" id="RHEA:17989"/>
        <dbReference type="Rhea" id="RHEA-COMP:9863"/>
        <dbReference type="Rhea" id="RHEA-COMP:11604"/>
        <dbReference type="ChEBI" id="CHEBI:15378"/>
        <dbReference type="ChEBI" id="CHEBI:29999"/>
        <dbReference type="ChEBI" id="CHEBI:30616"/>
        <dbReference type="ChEBI" id="CHEBI:83421"/>
        <dbReference type="ChEBI" id="CHEBI:456216"/>
        <dbReference type="EC" id="2.7.11.1"/>
    </reaction>
</comment>
<comment type="catalytic activity">
    <reaction evidence="6">
        <text>L-threonyl-[protein] + ATP = O-phospho-L-threonyl-[protein] + ADP + H(+)</text>
        <dbReference type="Rhea" id="RHEA:46608"/>
        <dbReference type="Rhea" id="RHEA-COMP:11060"/>
        <dbReference type="Rhea" id="RHEA-COMP:11605"/>
        <dbReference type="ChEBI" id="CHEBI:15378"/>
        <dbReference type="ChEBI" id="CHEBI:30013"/>
        <dbReference type="ChEBI" id="CHEBI:30616"/>
        <dbReference type="ChEBI" id="CHEBI:61977"/>
        <dbReference type="ChEBI" id="CHEBI:456216"/>
        <dbReference type="EC" id="2.7.11.1"/>
    </reaction>
</comment>
<comment type="cofactor">
    <cofactor evidence="6">
        <name>Mg(2+)</name>
        <dbReference type="ChEBI" id="CHEBI:18420"/>
    </cofactor>
</comment>
<comment type="subunit">
    <text evidence="7">Interacts with tax-6.</text>
</comment>
<comment type="interaction">
    <interactant intactId="EBI-2893174">
        <id>Q21017</id>
    </interactant>
    <interactant intactId="EBI-323063">
        <id>Q0G819</id>
        <label>tax-6</label>
    </interactant>
    <organismsDiffer>false</organismsDiffer>
    <experiments>3</experiments>
</comment>
<comment type="subcellular location">
    <subcellularLocation>
        <location evidence="5 6">Cytoplasm</location>
    </subcellularLocation>
    <subcellularLocation>
        <location evidence="5 6">Nucleus</location>
    </subcellularLocation>
    <text evidence="5 6">Nuclear in larval stage. Predominantly cytoplasmic in the adult but translocates into the nucleus following heat shock.</text>
</comment>
<comment type="tissue specificity">
    <text evidence="5">Primarily neuronal, with additional expression in body wall muscle and hypodermal cells. Among neuronal cells, expressed in multiple sensory neurons and interneurons in the lateral, anterior, and lumbar ganglia, as well as in motor neurons in the ventral motor cord. Present in the AWB and AWC olfactory neurons.</text>
</comment>
<comment type="developmental stage">
    <text evidence="5 6">Expressed throughout all stages of postembryonic development. Observed in the intestine and in cells in the tail during L1, L3 and L4.</text>
</comment>
<comment type="PTM">
    <text evidence="6 9">Autophosphorylated. Elevated cAMP levels appears to act via PKA to directly or indirectly phosphorylate multiple sites on kin-29 and inhibit function.</text>
</comment>
<comment type="disruption phenotype">
    <text evidence="5 6 8 9">Defective in the expression of a set of chemoreceptor genes, and exhibit characteristics associated with altered sensory signaling, including increased lifespan, decreased body size, and deregulated entry into the dauer developmental stage. Exhibit defects in food-induced quiescence behavior.</text>
</comment>
<comment type="similarity">
    <text evidence="11">Belongs to the protein kinase superfamily. CAMK Ser/Thr protein kinase family. SNF1 subfamily.</text>
</comment>
<feature type="chain" id="PRO_0000398619" description="Serine/threonine-protein kinase kin-29">
    <location>
        <begin position="1"/>
        <end position="822"/>
    </location>
</feature>
<feature type="domain" description="Protein kinase" evidence="2">
    <location>
        <begin position="16"/>
        <end position="267"/>
    </location>
</feature>
<feature type="region of interest" description="Disordered" evidence="4">
    <location>
        <begin position="348"/>
        <end position="367"/>
    </location>
</feature>
<feature type="region of interest" description="Disordered" evidence="4">
    <location>
        <begin position="389"/>
        <end position="423"/>
    </location>
</feature>
<feature type="region of interest" description="Disordered" evidence="4">
    <location>
        <begin position="577"/>
        <end position="602"/>
    </location>
</feature>
<feature type="compositionally biased region" description="Acidic residues" evidence="4">
    <location>
        <begin position="394"/>
        <end position="406"/>
    </location>
</feature>
<feature type="active site" description="Proton acceptor" evidence="1 2 3">
    <location>
        <position position="138"/>
    </location>
</feature>
<feature type="binding site" evidence="1 2">
    <location>
        <begin position="22"/>
        <end position="30"/>
    </location>
    <ligand>
        <name>ATP</name>
        <dbReference type="ChEBI" id="CHEBI:30616"/>
    </ligand>
</feature>
<feature type="binding site" evidence="1 2">
    <location>
        <position position="45"/>
    </location>
    <ligand>
        <name>ATP</name>
        <dbReference type="ChEBI" id="CHEBI:30616"/>
    </ligand>
</feature>